<comment type="catalytic activity">
    <reaction evidence="1">
        <text>GTP + H2O = 7,8-dihydroneopterin 3'-triphosphate + formate + H(+)</text>
        <dbReference type="Rhea" id="RHEA:17473"/>
        <dbReference type="ChEBI" id="CHEBI:15377"/>
        <dbReference type="ChEBI" id="CHEBI:15378"/>
        <dbReference type="ChEBI" id="CHEBI:15740"/>
        <dbReference type="ChEBI" id="CHEBI:37565"/>
        <dbReference type="ChEBI" id="CHEBI:58462"/>
        <dbReference type="EC" id="3.5.4.16"/>
    </reaction>
</comment>
<comment type="pathway">
    <text evidence="1">Cofactor biosynthesis; 7,8-dihydroneopterin triphosphate biosynthesis; 7,8-dihydroneopterin triphosphate from GTP: step 1/1.</text>
</comment>
<comment type="subunit">
    <text evidence="1">Homomer.</text>
</comment>
<comment type="similarity">
    <text evidence="1">Belongs to the GTP cyclohydrolase I family.</text>
</comment>
<proteinExistence type="inferred from homology"/>
<protein>
    <recommendedName>
        <fullName evidence="1">GTP cyclohydrolase 1</fullName>
        <ecNumber evidence="1">3.5.4.16</ecNumber>
    </recommendedName>
    <alternativeName>
        <fullName evidence="1">GTP cyclohydrolase I</fullName>
        <shortName evidence="1">GTP-CH-I</shortName>
    </alternativeName>
</protein>
<keyword id="KW-0342">GTP-binding</keyword>
<keyword id="KW-0378">Hydrolase</keyword>
<keyword id="KW-0479">Metal-binding</keyword>
<keyword id="KW-0547">Nucleotide-binding</keyword>
<keyword id="KW-0554">One-carbon metabolism</keyword>
<keyword id="KW-1185">Reference proteome</keyword>
<keyword id="KW-0862">Zinc</keyword>
<name>GCH1_CLOK5</name>
<sequence>MDENKIKDAVRMIIEAIGENPEREGLAETPDRIARMYTEIFSGLKEKPEEHLKKVFTVNNDDIVLEKDIQFYSMCEHHFMPFYGKTHVAYIPNGKVVGLSKLARTVEVFAKRLQLQERMTVQIADSIMDYLKVKGVMVVIEAEHMCMTMRGIKKPGSKTVTVATRGIFKNKIEFRNQVYEMIKMK</sequence>
<evidence type="ECO:0000255" key="1">
    <source>
        <dbReference type="HAMAP-Rule" id="MF_00223"/>
    </source>
</evidence>
<gene>
    <name evidence="1" type="primary">folE</name>
    <name type="ordered locus">CKL_0958</name>
</gene>
<dbReference type="EC" id="3.5.4.16" evidence="1"/>
<dbReference type="EMBL" id="CP000673">
    <property type="protein sequence ID" value="EDK33004.1"/>
    <property type="molecule type" value="Genomic_DNA"/>
</dbReference>
<dbReference type="SMR" id="A5N6S3"/>
<dbReference type="STRING" id="431943.CKL_0958"/>
<dbReference type="KEGG" id="ckl:CKL_0958"/>
<dbReference type="eggNOG" id="COG0302">
    <property type="taxonomic scope" value="Bacteria"/>
</dbReference>
<dbReference type="HOGENOM" id="CLU_049768_3_3_9"/>
<dbReference type="UniPathway" id="UPA00848">
    <property type="reaction ID" value="UER00151"/>
</dbReference>
<dbReference type="Proteomes" id="UP000002411">
    <property type="component" value="Chromosome"/>
</dbReference>
<dbReference type="GO" id="GO:0005737">
    <property type="term" value="C:cytoplasm"/>
    <property type="evidence" value="ECO:0007669"/>
    <property type="project" value="TreeGrafter"/>
</dbReference>
<dbReference type="GO" id="GO:0005525">
    <property type="term" value="F:GTP binding"/>
    <property type="evidence" value="ECO:0007669"/>
    <property type="project" value="UniProtKB-KW"/>
</dbReference>
<dbReference type="GO" id="GO:0003934">
    <property type="term" value="F:GTP cyclohydrolase I activity"/>
    <property type="evidence" value="ECO:0007669"/>
    <property type="project" value="UniProtKB-UniRule"/>
</dbReference>
<dbReference type="GO" id="GO:0008270">
    <property type="term" value="F:zinc ion binding"/>
    <property type="evidence" value="ECO:0007669"/>
    <property type="project" value="UniProtKB-UniRule"/>
</dbReference>
<dbReference type="GO" id="GO:0006730">
    <property type="term" value="P:one-carbon metabolic process"/>
    <property type="evidence" value="ECO:0007669"/>
    <property type="project" value="UniProtKB-UniRule"/>
</dbReference>
<dbReference type="GO" id="GO:0006729">
    <property type="term" value="P:tetrahydrobiopterin biosynthetic process"/>
    <property type="evidence" value="ECO:0007669"/>
    <property type="project" value="TreeGrafter"/>
</dbReference>
<dbReference type="GO" id="GO:0046654">
    <property type="term" value="P:tetrahydrofolate biosynthetic process"/>
    <property type="evidence" value="ECO:0007669"/>
    <property type="project" value="UniProtKB-UniRule"/>
</dbReference>
<dbReference type="FunFam" id="1.10.286.10:FF:000001">
    <property type="entry name" value="GTP cyclohydrolase 1"/>
    <property type="match status" value="1"/>
</dbReference>
<dbReference type="FunFam" id="3.30.1130.10:FF:000001">
    <property type="entry name" value="GTP cyclohydrolase 1"/>
    <property type="match status" value="1"/>
</dbReference>
<dbReference type="Gene3D" id="1.10.286.10">
    <property type="match status" value="1"/>
</dbReference>
<dbReference type="Gene3D" id="3.30.1130.10">
    <property type="match status" value="1"/>
</dbReference>
<dbReference type="HAMAP" id="MF_00223">
    <property type="entry name" value="FolE"/>
    <property type="match status" value="1"/>
</dbReference>
<dbReference type="InterPro" id="IPR043133">
    <property type="entry name" value="GTP-CH-I_C/QueF"/>
</dbReference>
<dbReference type="InterPro" id="IPR043134">
    <property type="entry name" value="GTP-CH-I_N"/>
</dbReference>
<dbReference type="InterPro" id="IPR001474">
    <property type="entry name" value="GTP_CycHdrlase_I"/>
</dbReference>
<dbReference type="InterPro" id="IPR018234">
    <property type="entry name" value="GTP_CycHdrlase_I_CS"/>
</dbReference>
<dbReference type="InterPro" id="IPR020602">
    <property type="entry name" value="GTP_CycHdrlase_I_dom"/>
</dbReference>
<dbReference type="NCBIfam" id="TIGR00063">
    <property type="entry name" value="folE"/>
    <property type="match status" value="1"/>
</dbReference>
<dbReference type="NCBIfam" id="NF006825">
    <property type="entry name" value="PRK09347.1-2"/>
    <property type="match status" value="1"/>
</dbReference>
<dbReference type="NCBIfam" id="NF006826">
    <property type="entry name" value="PRK09347.1-3"/>
    <property type="match status" value="1"/>
</dbReference>
<dbReference type="PANTHER" id="PTHR11109:SF7">
    <property type="entry name" value="GTP CYCLOHYDROLASE 1"/>
    <property type="match status" value="1"/>
</dbReference>
<dbReference type="PANTHER" id="PTHR11109">
    <property type="entry name" value="GTP CYCLOHYDROLASE I"/>
    <property type="match status" value="1"/>
</dbReference>
<dbReference type="Pfam" id="PF01227">
    <property type="entry name" value="GTP_cyclohydroI"/>
    <property type="match status" value="1"/>
</dbReference>
<dbReference type="SUPFAM" id="SSF55620">
    <property type="entry name" value="Tetrahydrobiopterin biosynthesis enzymes-like"/>
    <property type="match status" value="1"/>
</dbReference>
<dbReference type="PROSITE" id="PS00859">
    <property type="entry name" value="GTP_CYCLOHYDROL_1_1"/>
    <property type="match status" value="1"/>
</dbReference>
<dbReference type="PROSITE" id="PS00860">
    <property type="entry name" value="GTP_CYCLOHYDROL_1_2"/>
    <property type="match status" value="1"/>
</dbReference>
<feature type="chain" id="PRO_1000100169" description="GTP cyclohydrolase 1">
    <location>
        <begin position="1"/>
        <end position="185"/>
    </location>
</feature>
<feature type="binding site" evidence="1">
    <location>
        <position position="75"/>
    </location>
    <ligand>
        <name>Zn(2+)</name>
        <dbReference type="ChEBI" id="CHEBI:29105"/>
    </ligand>
</feature>
<feature type="binding site" evidence="1">
    <location>
        <position position="78"/>
    </location>
    <ligand>
        <name>Zn(2+)</name>
        <dbReference type="ChEBI" id="CHEBI:29105"/>
    </ligand>
</feature>
<feature type="binding site" evidence="1">
    <location>
        <position position="146"/>
    </location>
    <ligand>
        <name>Zn(2+)</name>
        <dbReference type="ChEBI" id="CHEBI:29105"/>
    </ligand>
</feature>
<accession>A5N6S3</accession>
<organism>
    <name type="scientific">Clostridium kluyveri (strain ATCC 8527 / DSM 555 / NBRC 12016 / NCIMB 10680 / K1)</name>
    <dbReference type="NCBI Taxonomy" id="431943"/>
    <lineage>
        <taxon>Bacteria</taxon>
        <taxon>Bacillati</taxon>
        <taxon>Bacillota</taxon>
        <taxon>Clostridia</taxon>
        <taxon>Eubacteriales</taxon>
        <taxon>Clostridiaceae</taxon>
        <taxon>Clostridium</taxon>
    </lineage>
</organism>
<reference key="1">
    <citation type="journal article" date="2008" name="Proc. Natl. Acad. Sci. U.S.A.">
        <title>The genome of Clostridium kluyveri, a strict anaerobe with unique metabolic features.</title>
        <authorList>
            <person name="Seedorf H."/>
            <person name="Fricke W.F."/>
            <person name="Veith B."/>
            <person name="Brueggemann H."/>
            <person name="Liesegang H."/>
            <person name="Strittmatter A."/>
            <person name="Miethke M."/>
            <person name="Buckel W."/>
            <person name="Hinderberger J."/>
            <person name="Li F."/>
            <person name="Hagemeier C."/>
            <person name="Thauer R.K."/>
            <person name="Gottschalk G."/>
        </authorList>
    </citation>
    <scope>NUCLEOTIDE SEQUENCE [LARGE SCALE GENOMIC DNA]</scope>
    <source>
        <strain>ATCC 8527 / DSM 555 / NBRC 12016 / NCIMB 10680 / K1</strain>
    </source>
</reference>